<organism>
    <name type="scientific">Scardovia inopinata</name>
    <name type="common">Bifidobacterium inopinatum</name>
    <dbReference type="NCBI Taxonomy" id="78259"/>
    <lineage>
        <taxon>Bacteria</taxon>
        <taxon>Bacillati</taxon>
        <taxon>Actinomycetota</taxon>
        <taxon>Actinomycetes</taxon>
        <taxon>Bifidobacteriales</taxon>
        <taxon>Bifidobacteriaceae</taxon>
        <taxon>Scardovia</taxon>
    </lineage>
</organism>
<protein>
    <recommendedName>
        <fullName evidence="1">Chaperonin GroEL</fullName>
        <ecNumber evidence="1">5.6.1.7</ecNumber>
    </recommendedName>
    <alternativeName>
        <fullName evidence="1">60 kDa chaperonin</fullName>
    </alternativeName>
    <alternativeName>
        <fullName evidence="1">Chaperonin-60</fullName>
        <shortName evidence="1">Cpn60</shortName>
    </alternativeName>
</protein>
<proteinExistence type="inferred from homology"/>
<name>CH60_SCAIO</name>
<reference key="1">
    <citation type="journal article" date="2002" name="Wei Sheng Wu Xue Bao">
        <title>Amplification of bacterial heat shock protein 60 gene using inverse PCR method.</title>
        <authorList>
            <person name="Jian W."/>
            <person name="Dong X."/>
        </authorList>
    </citation>
    <scope>NUCLEOTIDE SEQUENCE [GENOMIC DNA]</scope>
    <source>
        <strain>DSM 10107 / NCTC 12937 / CCUG 35729 / B3109</strain>
    </source>
</reference>
<gene>
    <name evidence="1" type="primary">groEL</name>
    <name evidence="1" type="synonym">groL</name>
    <name type="synonym">hsp60</name>
</gene>
<accession>Q9EY76</accession>
<comment type="function">
    <text evidence="1">Together with its co-chaperonin GroES, plays an essential role in assisting protein folding. The GroEL-GroES system forms a nano-cage that allows encapsulation of the non-native substrate proteins and provides a physical environment optimized to promote and accelerate protein folding.</text>
</comment>
<comment type="catalytic activity">
    <reaction evidence="1">
        <text>ATP + H2O + a folded polypeptide = ADP + phosphate + an unfolded polypeptide.</text>
        <dbReference type="EC" id="5.6.1.7"/>
    </reaction>
</comment>
<comment type="subunit">
    <text evidence="1">Forms a cylinder of 14 subunits composed of two heptameric rings stacked back-to-back. Interacts with the co-chaperonin GroES.</text>
</comment>
<comment type="subcellular location">
    <subcellularLocation>
        <location evidence="1">Cytoplasm</location>
    </subcellularLocation>
</comment>
<comment type="similarity">
    <text evidence="1">Belongs to the chaperonin (HSP60) family.</text>
</comment>
<dbReference type="EC" id="5.6.1.7" evidence="1"/>
<dbReference type="EMBL" id="AY004281">
    <property type="protein sequence ID" value="AAF89506.2"/>
    <property type="molecule type" value="Genomic_DNA"/>
</dbReference>
<dbReference type="SMR" id="Q9EY76"/>
<dbReference type="GO" id="GO:0005737">
    <property type="term" value="C:cytoplasm"/>
    <property type="evidence" value="ECO:0007669"/>
    <property type="project" value="UniProtKB-SubCell"/>
</dbReference>
<dbReference type="GO" id="GO:0005524">
    <property type="term" value="F:ATP binding"/>
    <property type="evidence" value="ECO:0007669"/>
    <property type="project" value="UniProtKB-UniRule"/>
</dbReference>
<dbReference type="GO" id="GO:0140662">
    <property type="term" value="F:ATP-dependent protein folding chaperone"/>
    <property type="evidence" value="ECO:0007669"/>
    <property type="project" value="InterPro"/>
</dbReference>
<dbReference type="GO" id="GO:0016853">
    <property type="term" value="F:isomerase activity"/>
    <property type="evidence" value="ECO:0007669"/>
    <property type="project" value="UniProtKB-KW"/>
</dbReference>
<dbReference type="GO" id="GO:0051082">
    <property type="term" value="F:unfolded protein binding"/>
    <property type="evidence" value="ECO:0007669"/>
    <property type="project" value="UniProtKB-UniRule"/>
</dbReference>
<dbReference type="GO" id="GO:0042026">
    <property type="term" value="P:protein refolding"/>
    <property type="evidence" value="ECO:0007669"/>
    <property type="project" value="UniProtKB-UniRule"/>
</dbReference>
<dbReference type="CDD" id="cd03344">
    <property type="entry name" value="GroEL"/>
    <property type="match status" value="1"/>
</dbReference>
<dbReference type="FunFam" id="3.50.7.10:FF:000001">
    <property type="entry name" value="60 kDa chaperonin"/>
    <property type="match status" value="1"/>
</dbReference>
<dbReference type="Gene3D" id="3.50.7.10">
    <property type="entry name" value="GroEL"/>
    <property type="match status" value="1"/>
</dbReference>
<dbReference type="Gene3D" id="1.10.560.10">
    <property type="entry name" value="GroEL-like equatorial domain"/>
    <property type="match status" value="1"/>
</dbReference>
<dbReference type="Gene3D" id="3.30.260.10">
    <property type="entry name" value="TCP-1-like chaperonin intermediate domain"/>
    <property type="match status" value="1"/>
</dbReference>
<dbReference type="HAMAP" id="MF_00600">
    <property type="entry name" value="CH60"/>
    <property type="match status" value="1"/>
</dbReference>
<dbReference type="InterPro" id="IPR018370">
    <property type="entry name" value="Chaperonin_Cpn60_CS"/>
</dbReference>
<dbReference type="InterPro" id="IPR001844">
    <property type="entry name" value="Cpn60/GroEL"/>
</dbReference>
<dbReference type="InterPro" id="IPR002423">
    <property type="entry name" value="Cpn60/GroEL/TCP-1"/>
</dbReference>
<dbReference type="InterPro" id="IPR027409">
    <property type="entry name" value="GroEL-like_apical_dom_sf"/>
</dbReference>
<dbReference type="InterPro" id="IPR027413">
    <property type="entry name" value="GROEL-like_equatorial_sf"/>
</dbReference>
<dbReference type="InterPro" id="IPR027410">
    <property type="entry name" value="TCP-1-like_intermed_sf"/>
</dbReference>
<dbReference type="NCBIfam" id="TIGR02348">
    <property type="entry name" value="GroEL"/>
    <property type="match status" value="1"/>
</dbReference>
<dbReference type="NCBIfam" id="NF000592">
    <property type="entry name" value="PRK00013.1"/>
    <property type="match status" value="1"/>
</dbReference>
<dbReference type="NCBIfam" id="NF009487">
    <property type="entry name" value="PRK12849.1"/>
    <property type="match status" value="1"/>
</dbReference>
<dbReference type="NCBIfam" id="NF009488">
    <property type="entry name" value="PRK12850.1"/>
    <property type="match status" value="1"/>
</dbReference>
<dbReference type="NCBIfam" id="NF009489">
    <property type="entry name" value="PRK12851.1"/>
    <property type="match status" value="1"/>
</dbReference>
<dbReference type="PANTHER" id="PTHR45633">
    <property type="entry name" value="60 KDA HEAT SHOCK PROTEIN, MITOCHONDRIAL"/>
    <property type="match status" value="1"/>
</dbReference>
<dbReference type="Pfam" id="PF00118">
    <property type="entry name" value="Cpn60_TCP1"/>
    <property type="match status" value="1"/>
</dbReference>
<dbReference type="PRINTS" id="PR00298">
    <property type="entry name" value="CHAPERONIN60"/>
</dbReference>
<dbReference type="SUPFAM" id="SSF52029">
    <property type="entry name" value="GroEL apical domain-like"/>
    <property type="match status" value="1"/>
</dbReference>
<dbReference type="SUPFAM" id="SSF48592">
    <property type="entry name" value="GroEL equatorial domain-like"/>
    <property type="match status" value="1"/>
</dbReference>
<dbReference type="SUPFAM" id="SSF54849">
    <property type="entry name" value="GroEL-intermediate domain like"/>
    <property type="match status" value="1"/>
</dbReference>
<dbReference type="PROSITE" id="PS00296">
    <property type="entry name" value="CHAPERONINS_CPN60"/>
    <property type="match status" value="1"/>
</dbReference>
<sequence length="538" mass="56613">MAKIIKYDEEARQGMLEGLDELANTVKVTLGPRGRNVVLDKTYGAPTITNDGVSIAKEIDLEDPYARIGAELVKEVAKKTDDVAGDGTTTATVLAQSLVHEGLRNVTAGSNPIALRRGIEKASDAIVERLLSNAKPVETKEQIAATATISAGDPEVGDKIAEALDKVGQDGVVTVEDNNKFGLDLEFTEGMRFDKGYISPYFVTNADEQTAVLEDPYILLTSGKVSSQQDIVHIAELVMKSGKPLLIVAEDVDGEALPTLVLNKIRGTFNTVAVKAPGFGDRRKAMLQDMAILTGAQVVSDELGLKLDSIDDTVFGHASKVIVSKDETTIVSGAGSKEDVAARVAQIRSEIEDSDSDYDREKLQERLAKLAGGVAVIKVGAATEVEAKERKHRIEDAVRNAKAAIEEGLLPGGGVALVQAAADVQKNVKLEGDEATGAGIVFRAIEAPLKQIAQNAGFSGEVVIDKVRTLPAGSGLNAATGEYEDLLSAGVTDPVKVTRSALQNAASIAGLFLTTEAVVANKPEPPAPAAAPNPDMGY</sequence>
<keyword id="KW-0067">ATP-binding</keyword>
<keyword id="KW-0143">Chaperone</keyword>
<keyword id="KW-0963">Cytoplasm</keyword>
<keyword id="KW-0413">Isomerase</keyword>
<keyword id="KW-0547">Nucleotide-binding</keyword>
<feature type="chain" id="PRO_0000063523" description="Chaperonin GroEL">
    <location>
        <begin position="1"/>
        <end position="538"/>
    </location>
</feature>
<feature type="binding site" evidence="1">
    <location>
        <begin position="29"/>
        <end position="32"/>
    </location>
    <ligand>
        <name>ATP</name>
        <dbReference type="ChEBI" id="CHEBI:30616"/>
    </ligand>
</feature>
<feature type="binding site" evidence="1">
    <location>
        <begin position="86"/>
        <end position="90"/>
    </location>
    <ligand>
        <name>ATP</name>
        <dbReference type="ChEBI" id="CHEBI:30616"/>
    </ligand>
</feature>
<feature type="binding site" evidence="1">
    <location>
        <position position="413"/>
    </location>
    <ligand>
        <name>ATP</name>
        <dbReference type="ChEBI" id="CHEBI:30616"/>
    </ligand>
</feature>
<feature type="binding site" evidence="1">
    <location>
        <begin position="477"/>
        <end position="479"/>
    </location>
    <ligand>
        <name>ATP</name>
        <dbReference type="ChEBI" id="CHEBI:30616"/>
    </ligand>
</feature>
<feature type="binding site" evidence="1">
    <location>
        <position position="493"/>
    </location>
    <ligand>
        <name>ATP</name>
        <dbReference type="ChEBI" id="CHEBI:30616"/>
    </ligand>
</feature>
<evidence type="ECO:0000255" key="1">
    <source>
        <dbReference type="HAMAP-Rule" id="MF_00600"/>
    </source>
</evidence>